<organism>
    <name type="scientific">Proteus mirabilis (strain HI4320)</name>
    <dbReference type="NCBI Taxonomy" id="529507"/>
    <lineage>
        <taxon>Bacteria</taxon>
        <taxon>Pseudomonadati</taxon>
        <taxon>Pseudomonadota</taxon>
        <taxon>Gammaproteobacteria</taxon>
        <taxon>Enterobacterales</taxon>
        <taxon>Morganellaceae</taxon>
        <taxon>Proteus</taxon>
    </lineage>
</organism>
<gene>
    <name evidence="1" type="primary">rppH</name>
    <name evidence="1" type="synonym">nudH</name>
    <name type="ordered locus">PMI2321</name>
</gene>
<comment type="function">
    <text evidence="1">Accelerates the degradation of transcripts by removing pyrophosphate from the 5'-end of triphosphorylated RNA, leading to a more labile monophosphorylated state that can stimulate subsequent ribonuclease cleavage.</text>
</comment>
<comment type="cofactor">
    <cofactor evidence="1">
        <name>a divalent metal cation</name>
        <dbReference type="ChEBI" id="CHEBI:60240"/>
    </cofactor>
</comment>
<comment type="similarity">
    <text evidence="1">Belongs to the Nudix hydrolase family. RppH subfamily.</text>
</comment>
<accession>B4F2G9</accession>
<reference key="1">
    <citation type="journal article" date="2008" name="J. Bacteriol.">
        <title>Complete genome sequence of uropathogenic Proteus mirabilis, a master of both adherence and motility.</title>
        <authorList>
            <person name="Pearson M.M."/>
            <person name="Sebaihia M."/>
            <person name="Churcher C."/>
            <person name="Quail M.A."/>
            <person name="Seshasayee A.S."/>
            <person name="Luscombe N.M."/>
            <person name="Abdellah Z."/>
            <person name="Arrosmith C."/>
            <person name="Atkin B."/>
            <person name="Chillingworth T."/>
            <person name="Hauser H."/>
            <person name="Jagels K."/>
            <person name="Moule S."/>
            <person name="Mungall K."/>
            <person name="Norbertczak H."/>
            <person name="Rabbinowitsch E."/>
            <person name="Walker D."/>
            <person name="Whithead S."/>
            <person name="Thomson N.R."/>
            <person name="Rather P.N."/>
            <person name="Parkhill J."/>
            <person name="Mobley H.L.T."/>
        </authorList>
    </citation>
    <scope>NUCLEOTIDE SEQUENCE [LARGE SCALE GENOMIC DNA]</scope>
    <source>
        <strain>HI4320</strain>
    </source>
</reference>
<keyword id="KW-0378">Hydrolase</keyword>
<keyword id="KW-1185">Reference proteome</keyword>
<evidence type="ECO:0000255" key="1">
    <source>
        <dbReference type="HAMAP-Rule" id="MF_00298"/>
    </source>
</evidence>
<feature type="chain" id="PRO_1000115288" description="RNA pyrophosphohydrolase">
    <location>
        <begin position="1"/>
        <end position="176"/>
    </location>
</feature>
<feature type="domain" description="Nudix hydrolase" evidence="1">
    <location>
        <begin position="6"/>
        <end position="149"/>
    </location>
</feature>
<feature type="short sequence motif" description="Nudix box">
    <location>
        <begin position="38"/>
        <end position="59"/>
    </location>
</feature>
<protein>
    <recommendedName>
        <fullName evidence="1">RNA pyrophosphohydrolase</fullName>
        <ecNumber evidence="1">3.6.1.-</ecNumber>
    </recommendedName>
    <alternativeName>
        <fullName evidence="1">(Di)nucleoside polyphosphate hydrolase</fullName>
    </alternativeName>
</protein>
<proteinExistence type="inferred from homology"/>
<dbReference type="EC" id="3.6.1.-" evidence="1"/>
<dbReference type="EMBL" id="AM942759">
    <property type="protein sequence ID" value="CAR44591.1"/>
    <property type="molecule type" value="Genomic_DNA"/>
</dbReference>
<dbReference type="RefSeq" id="WP_004245524.1">
    <property type="nucleotide sequence ID" value="NC_010554.1"/>
</dbReference>
<dbReference type="SMR" id="B4F2G9"/>
<dbReference type="EnsemblBacteria" id="CAR44591">
    <property type="protein sequence ID" value="CAR44591"/>
    <property type="gene ID" value="PMI2321"/>
</dbReference>
<dbReference type="GeneID" id="6800429"/>
<dbReference type="KEGG" id="pmr:PMI2321"/>
<dbReference type="eggNOG" id="COG0494">
    <property type="taxonomic scope" value="Bacteria"/>
</dbReference>
<dbReference type="HOGENOM" id="CLU_087195_3_2_6"/>
<dbReference type="Proteomes" id="UP000008319">
    <property type="component" value="Chromosome"/>
</dbReference>
<dbReference type="GO" id="GO:0005737">
    <property type="term" value="C:cytoplasm"/>
    <property type="evidence" value="ECO:0007669"/>
    <property type="project" value="TreeGrafter"/>
</dbReference>
<dbReference type="GO" id="GO:0034353">
    <property type="term" value="F:mRNA 5'-diphosphatase activity"/>
    <property type="evidence" value="ECO:0007669"/>
    <property type="project" value="TreeGrafter"/>
</dbReference>
<dbReference type="GO" id="GO:0006402">
    <property type="term" value="P:mRNA catabolic process"/>
    <property type="evidence" value="ECO:0007669"/>
    <property type="project" value="TreeGrafter"/>
</dbReference>
<dbReference type="CDD" id="cd03671">
    <property type="entry name" value="NUDIX_Ap4A_hydrolase_plant_like"/>
    <property type="match status" value="1"/>
</dbReference>
<dbReference type="FunFam" id="3.90.79.10:FF:000001">
    <property type="entry name" value="RNA pyrophosphohydrolase"/>
    <property type="match status" value="1"/>
</dbReference>
<dbReference type="Gene3D" id="3.90.79.10">
    <property type="entry name" value="Nucleoside Triphosphate Pyrophosphohydrolase"/>
    <property type="match status" value="1"/>
</dbReference>
<dbReference type="HAMAP" id="MF_00298">
    <property type="entry name" value="Nudix_RppH"/>
    <property type="match status" value="1"/>
</dbReference>
<dbReference type="InterPro" id="IPR020476">
    <property type="entry name" value="Nudix_hydrolase"/>
</dbReference>
<dbReference type="InterPro" id="IPR015797">
    <property type="entry name" value="NUDIX_hydrolase-like_dom_sf"/>
</dbReference>
<dbReference type="InterPro" id="IPR020084">
    <property type="entry name" value="NUDIX_hydrolase_CS"/>
</dbReference>
<dbReference type="InterPro" id="IPR000086">
    <property type="entry name" value="NUDIX_hydrolase_dom"/>
</dbReference>
<dbReference type="InterPro" id="IPR022927">
    <property type="entry name" value="RppH"/>
</dbReference>
<dbReference type="NCBIfam" id="NF001934">
    <property type="entry name" value="PRK00714.1-1"/>
    <property type="match status" value="1"/>
</dbReference>
<dbReference type="NCBIfam" id="NF001937">
    <property type="entry name" value="PRK00714.1-4"/>
    <property type="match status" value="1"/>
</dbReference>
<dbReference type="NCBIfam" id="NF001938">
    <property type="entry name" value="PRK00714.1-5"/>
    <property type="match status" value="1"/>
</dbReference>
<dbReference type="PANTHER" id="PTHR23114">
    <property type="entry name" value="M7GPPPN-MRNA HYDROLASE"/>
    <property type="match status" value="1"/>
</dbReference>
<dbReference type="PANTHER" id="PTHR23114:SF17">
    <property type="entry name" value="M7GPPPN-MRNA HYDROLASE"/>
    <property type="match status" value="1"/>
</dbReference>
<dbReference type="Pfam" id="PF00293">
    <property type="entry name" value="NUDIX"/>
    <property type="match status" value="1"/>
</dbReference>
<dbReference type="PRINTS" id="PR00502">
    <property type="entry name" value="NUDIXFAMILY"/>
</dbReference>
<dbReference type="SUPFAM" id="SSF55811">
    <property type="entry name" value="Nudix"/>
    <property type="match status" value="1"/>
</dbReference>
<dbReference type="PROSITE" id="PS51462">
    <property type="entry name" value="NUDIX"/>
    <property type="match status" value="1"/>
</dbReference>
<dbReference type="PROSITE" id="PS00893">
    <property type="entry name" value="NUDIX_BOX"/>
    <property type="match status" value="1"/>
</dbReference>
<name>RPPH_PROMH</name>
<sequence length="176" mass="21167">MIDDDGYRPNVGIVICNRQGQVLWARRYGQHSWQFPQGGINPGESPEQAMYRELFEEVGLSRKDVKILASTRNWLRYKLPKRLVRWDTKPVCIGQKQRWFLLQLTSNDKDINVQQSKTPEFDGWRWVSYWYPVRQVVSFKRDVYRRVMKEFAPVVMPLQEQVSMSRPSYGYRRKRY</sequence>